<organism>
    <name type="scientific">Staphylococcus carnosus (strain TM300)</name>
    <dbReference type="NCBI Taxonomy" id="396513"/>
    <lineage>
        <taxon>Bacteria</taxon>
        <taxon>Bacillati</taxon>
        <taxon>Bacillota</taxon>
        <taxon>Bacilli</taxon>
        <taxon>Bacillales</taxon>
        <taxon>Staphylococcaceae</taxon>
        <taxon>Staphylococcus</taxon>
    </lineage>
</organism>
<evidence type="ECO:0000255" key="1">
    <source>
        <dbReference type="HAMAP-Rule" id="MF_01824"/>
    </source>
</evidence>
<proteinExistence type="inferred from homology"/>
<gene>
    <name evidence="1" type="primary">pdxS</name>
    <name type="ordered locus">Sca_0173</name>
</gene>
<feature type="chain" id="PRO_1000188239" description="Pyridoxal 5'-phosphate synthase subunit PdxS">
    <location>
        <begin position="1"/>
        <end position="295"/>
    </location>
</feature>
<feature type="active site" description="Schiff-base intermediate with D-ribose 5-phosphate" evidence="1">
    <location>
        <position position="82"/>
    </location>
</feature>
<feature type="binding site" evidence="1">
    <location>
        <position position="25"/>
    </location>
    <ligand>
        <name>D-ribose 5-phosphate</name>
        <dbReference type="ChEBI" id="CHEBI:78346"/>
    </ligand>
</feature>
<feature type="binding site" evidence="1">
    <location>
        <position position="154"/>
    </location>
    <ligand>
        <name>D-ribose 5-phosphate</name>
        <dbReference type="ChEBI" id="CHEBI:78346"/>
    </ligand>
</feature>
<feature type="binding site" evidence="1">
    <location>
        <position position="166"/>
    </location>
    <ligand>
        <name>D-glyceraldehyde 3-phosphate</name>
        <dbReference type="ChEBI" id="CHEBI:59776"/>
    </ligand>
</feature>
<feature type="binding site" evidence="1">
    <location>
        <position position="215"/>
    </location>
    <ligand>
        <name>D-ribose 5-phosphate</name>
        <dbReference type="ChEBI" id="CHEBI:78346"/>
    </ligand>
</feature>
<feature type="binding site" evidence="1">
    <location>
        <begin position="236"/>
        <end position="237"/>
    </location>
    <ligand>
        <name>D-ribose 5-phosphate</name>
        <dbReference type="ChEBI" id="CHEBI:78346"/>
    </ligand>
</feature>
<name>PDXS_STACT</name>
<protein>
    <recommendedName>
        <fullName evidence="1">Pyridoxal 5'-phosphate synthase subunit PdxS</fullName>
        <shortName evidence="1">PLP synthase subunit PdxS</shortName>
        <ecNumber evidence="1">4.3.3.6</ecNumber>
    </recommendedName>
    <alternativeName>
        <fullName evidence="1">Pdx1</fullName>
    </alternativeName>
</protein>
<keyword id="KW-0456">Lyase</keyword>
<keyword id="KW-0663">Pyridoxal phosphate</keyword>
<keyword id="KW-1185">Reference proteome</keyword>
<keyword id="KW-0704">Schiff base</keyword>
<comment type="function">
    <text evidence="1">Catalyzes the formation of pyridoxal 5'-phosphate from ribose 5-phosphate (RBP), glyceraldehyde 3-phosphate (G3P) and ammonia. The ammonia is provided by the PdxT subunit. Can also use ribulose 5-phosphate and dihydroxyacetone phosphate as substrates, resulting from enzyme-catalyzed isomerization of RBP and G3P, respectively.</text>
</comment>
<comment type="catalytic activity">
    <reaction evidence="1">
        <text>aldehydo-D-ribose 5-phosphate + D-glyceraldehyde 3-phosphate + L-glutamine = pyridoxal 5'-phosphate + L-glutamate + phosphate + 3 H2O + H(+)</text>
        <dbReference type="Rhea" id="RHEA:31507"/>
        <dbReference type="ChEBI" id="CHEBI:15377"/>
        <dbReference type="ChEBI" id="CHEBI:15378"/>
        <dbReference type="ChEBI" id="CHEBI:29985"/>
        <dbReference type="ChEBI" id="CHEBI:43474"/>
        <dbReference type="ChEBI" id="CHEBI:58273"/>
        <dbReference type="ChEBI" id="CHEBI:58359"/>
        <dbReference type="ChEBI" id="CHEBI:59776"/>
        <dbReference type="ChEBI" id="CHEBI:597326"/>
        <dbReference type="EC" id="4.3.3.6"/>
    </reaction>
</comment>
<comment type="pathway">
    <text evidence="1">Cofactor biosynthesis; pyridoxal 5'-phosphate biosynthesis.</text>
</comment>
<comment type="subunit">
    <text evidence="1">In the presence of PdxT, forms a dodecamer of heterodimers.</text>
</comment>
<comment type="similarity">
    <text evidence="1">Belongs to the PdxS/SNZ family.</text>
</comment>
<dbReference type="EC" id="4.3.3.6" evidence="1"/>
<dbReference type="EMBL" id="AM295250">
    <property type="protein sequence ID" value="CAL27086.1"/>
    <property type="molecule type" value="Genomic_DNA"/>
</dbReference>
<dbReference type="RefSeq" id="WP_012664201.1">
    <property type="nucleotide sequence ID" value="NC_012121.1"/>
</dbReference>
<dbReference type="SMR" id="B9DKX7"/>
<dbReference type="GeneID" id="93795102"/>
<dbReference type="KEGG" id="sca:SCA_0173"/>
<dbReference type="eggNOG" id="COG0214">
    <property type="taxonomic scope" value="Bacteria"/>
</dbReference>
<dbReference type="HOGENOM" id="CLU_055352_1_0_9"/>
<dbReference type="OrthoDB" id="9772545at2"/>
<dbReference type="BioCyc" id="SCAR396513:SCA_RS00900-MONOMER"/>
<dbReference type="UniPathway" id="UPA00245"/>
<dbReference type="Proteomes" id="UP000000444">
    <property type="component" value="Chromosome"/>
</dbReference>
<dbReference type="GO" id="GO:0036381">
    <property type="term" value="F:pyridoxal 5'-phosphate synthase (glutamine hydrolysing) activity"/>
    <property type="evidence" value="ECO:0007669"/>
    <property type="project" value="UniProtKB-UniRule"/>
</dbReference>
<dbReference type="GO" id="GO:0006520">
    <property type="term" value="P:amino acid metabolic process"/>
    <property type="evidence" value="ECO:0007669"/>
    <property type="project" value="TreeGrafter"/>
</dbReference>
<dbReference type="GO" id="GO:0042823">
    <property type="term" value="P:pyridoxal phosphate biosynthetic process"/>
    <property type="evidence" value="ECO:0007669"/>
    <property type="project" value="UniProtKB-UniRule"/>
</dbReference>
<dbReference type="GO" id="GO:0008615">
    <property type="term" value="P:pyridoxine biosynthetic process"/>
    <property type="evidence" value="ECO:0007669"/>
    <property type="project" value="TreeGrafter"/>
</dbReference>
<dbReference type="CDD" id="cd04727">
    <property type="entry name" value="pdxS"/>
    <property type="match status" value="1"/>
</dbReference>
<dbReference type="FunFam" id="3.20.20.70:FF:000001">
    <property type="entry name" value="Pyridoxine biosynthesis protein PDX1"/>
    <property type="match status" value="1"/>
</dbReference>
<dbReference type="Gene3D" id="3.20.20.70">
    <property type="entry name" value="Aldolase class I"/>
    <property type="match status" value="1"/>
</dbReference>
<dbReference type="HAMAP" id="MF_01824">
    <property type="entry name" value="PdxS"/>
    <property type="match status" value="1"/>
</dbReference>
<dbReference type="InterPro" id="IPR013785">
    <property type="entry name" value="Aldolase_TIM"/>
</dbReference>
<dbReference type="InterPro" id="IPR001852">
    <property type="entry name" value="PdxS/SNZ"/>
</dbReference>
<dbReference type="InterPro" id="IPR033755">
    <property type="entry name" value="PdxS/SNZ_N"/>
</dbReference>
<dbReference type="InterPro" id="IPR011060">
    <property type="entry name" value="RibuloseP-bd_barrel"/>
</dbReference>
<dbReference type="NCBIfam" id="NF003215">
    <property type="entry name" value="PRK04180.1"/>
    <property type="match status" value="1"/>
</dbReference>
<dbReference type="NCBIfam" id="TIGR00343">
    <property type="entry name" value="pyridoxal 5'-phosphate synthase lyase subunit PdxS"/>
    <property type="match status" value="1"/>
</dbReference>
<dbReference type="PANTHER" id="PTHR31829">
    <property type="entry name" value="PYRIDOXAL 5'-PHOSPHATE SYNTHASE SUBUNIT SNZ1-RELATED"/>
    <property type="match status" value="1"/>
</dbReference>
<dbReference type="PANTHER" id="PTHR31829:SF0">
    <property type="entry name" value="PYRIDOXAL 5'-PHOSPHATE SYNTHASE SUBUNIT SNZ1-RELATED"/>
    <property type="match status" value="1"/>
</dbReference>
<dbReference type="Pfam" id="PF01680">
    <property type="entry name" value="SOR_SNZ"/>
    <property type="match status" value="1"/>
</dbReference>
<dbReference type="PIRSF" id="PIRSF029271">
    <property type="entry name" value="Pdx1"/>
    <property type="match status" value="1"/>
</dbReference>
<dbReference type="SUPFAM" id="SSF51366">
    <property type="entry name" value="Ribulose-phoshate binding barrel"/>
    <property type="match status" value="1"/>
</dbReference>
<dbReference type="PROSITE" id="PS01235">
    <property type="entry name" value="PDXS_SNZ_1"/>
    <property type="match status" value="1"/>
</dbReference>
<dbReference type="PROSITE" id="PS51129">
    <property type="entry name" value="PDXS_SNZ_2"/>
    <property type="match status" value="1"/>
</dbReference>
<sequence>MSKQVGSDRVKRGMAEMQKGGVIMDVVNAEQAKIAEEAGAVAVMALERVPSDIRAAGGVARACNPKIVQEVMDAVSIPVMAKCRIGHITEARVLESMGVDYIDESEVLTPADEEYHLLKSDYTVPFVCGCRNLGEAARRIGEGAAMLRTKGEPGTGNIVEAVRHMRQVNSEVAKLTVMPDDEIMTFAKEIGAPYEVLKSIKDNGRLPVVNFAAGGVATPQDAALMMQLGADGVFVGSGIFKSEDPEKFAKAIVQATTHYTDYELIGKLAQELGEAMRGLDVNQLSLEERMQERGW</sequence>
<accession>B9DKX7</accession>
<reference key="1">
    <citation type="journal article" date="2009" name="Appl. Environ. Microbiol.">
        <title>Genome analysis of the meat starter culture bacterium Staphylococcus carnosus TM300.</title>
        <authorList>
            <person name="Rosenstein R."/>
            <person name="Nerz C."/>
            <person name="Biswas L."/>
            <person name="Resch A."/>
            <person name="Raddatz G."/>
            <person name="Schuster S.C."/>
            <person name="Goetz F."/>
        </authorList>
    </citation>
    <scope>NUCLEOTIDE SEQUENCE [LARGE SCALE GENOMIC DNA]</scope>
    <source>
        <strain>TM300</strain>
    </source>
</reference>